<protein>
    <recommendedName>
        <fullName>Androgen receptor</fullName>
    </recommendedName>
    <alternativeName>
        <fullName>Dihydrotestosterone receptor</fullName>
    </alternativeName>
    <alternativeName>
        <fullName>Nuclear receptor subfamily 3 group C member 4</fullName>
    </alternativeName>
</protein>
<organism>
    <name type="scientific">Macaca fascicularis</name>
    <name type="common">Crab-eating macaque</name>
    <name type="synonym">Cynomolgus monkey</name>
    <dbReference type="NCBI Taxonomy" id="9541"/>
    <lineage>
        <taxon>Eukaryota</taxon>
        <taxon>Metazoa</taxon>
        <taxon>Chordata</taxon>
        <taxon>Craniata</taxon>
        <taxon>Vertebrata</taxon>
        <taxon>Euteleostomi</taxon>
        <taxon>Mammalia</taxon>
        <taxon>Eutheria</taxon>
        <taxon>Euarchontoglires</taxon>
        <taxon>Primates</taxon>
        <taxon>Haplorrhini</taxon>
        <taxon>Catarrhini</taxon>
        <taxon>Cercopithecidae</taxon>
        <taxon>Cercopithecinae</taxon>
        <taxon>Macaca</taxon>
    </lineage>
</organism>
<keyword id="KW-0963">Cytoplasm</keyword>
<keyword id="KW-0238">DNA-binding</keyword>
<keyword id="KW-1017">Isopeptide bond</keyword>
<keyword id="KW-0446">Lipid-binding</keyword>
<keyword id="KW-0449">Lipoprotein</keyword>
<keyword id="KW-0479">Metal-binding</keyword>
<keyword id="KW-0539">Nucleus</keyword>
<keyword id="KW-0564">Palmitate</keyword>
<keyword id="KW-0597">Phosphoprotein</keyword>
<keyword id="KW-0675">Receptor</keyword>
<keyword id="KW-1185">Reference proteome</keyword>
<keyword id="KW-0754">Steroid-binding</keyword>
<keyword id="KW-0804">Transcription</keyword>
<keyword id="KW-0805">Transcription regulation</keyword>
<keyword id="KW-0832">Ubl conjugation</keyword>
<keyword id="KW-0862">Zinc</keyword>
<keyword id="KW-0863">Zinc-finger</keyword>
<accession>O97952</accession>
<name>ANDR_MACFA</name>
<feature type="chain" id="PRO_0000053705" description="Androgen receptor">
    <location>
        <begin position="1"/>
        <end position="895"/>
    </location>
</feature>
<feature type="domain" description="NR LBD" evidence="6">
    <location>
        <begin position="644"/>
        <end position="875"/>
    </location>
</feature>
<feature type="DNA-binding region" description="Nuclear receptor" evidence="5">
    <location>
        <begin position="534"/>
        <end position="607"/>
    </location>
</feature>
<feature type="zinc finger region" description="NR C4-type" evidence="5">
    <location>
        <begin position="535"/>
        <end position="555"/>
    </location>
</feature>
<feature type="zinc finger region" description="NR C4-type" evidence="5">
    <location>
        <begin position="571"/>
        <end position="595"/>
    </location>
</feature>
<feature type="region of interest" description="Interaction with ZNF318" evidence="4">
    <location>
        <begin position="1"/>
        <end position="562"/>
    </location>
</feature>
<feature type="region of interest" description="Modulating" evidence="1">
    <location>
        <begin position="1"/>
        <end position="533"/>
    </location>
</feature>
<feature type="region of interest" description="Disordered" evidence="7">
    <location>
        <begin position="33"/>
        <end position="150"/>
    </location>
</feature>
<feature type="region of interest" description="Disordered" evidence="7">
    <location>
        <begin position="175"/>
        <end position="211"/>
    </location>
</feature>
<feature type="region of interest" description="Interaction with LPXN" evidence="2">
    <location>
        <begin position="527"/>
        <end position="894"/>
    </location>
</feature>
<feature type="region of interest" description="Interaction with HIPK3" evidence="3">
    <location>
        <begin position="547"/>
        <end position="637"/>
    </location>
</feature>
<feature type="region of interest" description="Interaction with CCAR1" evidence="2">
    <location>
        <begin position="567"/>
        <end position="894"/>
    </location>
</feature>
<feature type="region of interest" description="Interaction with KAT7" evidence="2">
    <location>
        <begin position="600"/>
        <end position="894"/>
    </location>
</feature>
<feature type="compositionally biased region" description="Low complexity" evidence="7">
    <location>
        <begin position="44"/>
        <end position="81"/>
    </location>
</feature>
<feature type="compositionally biased region" description="Low complexity" evidence="7">
    <location>
        <begin position="175"/>
        <end position="200"/>
    </location>
</feature>
<feature type="compositionally biased region" description="Polar residues" evidence="7">
    <location>
        <begin position="201"/>
        <end position="211"/>
    </location>
</feature>
<feature type="binding site" evidence="2">
    <location>
        <position position="681"/>
    </location>
    <ligand>
        <name>17beta-hydroxy-5alpha-androstan-3-one</name>
        <dbReference type="ChEBI" id="CHEBI:16330"/>
    </ligand>
</feature>
<feature type="binding site" evidence="2">
    <location>
        <position position="728"/>
    </location>
    <ligand>
        <name>17beta-hydroxy-5alpha-androstan-3-one</name>
        <dbReference type="ChEBI" id="CHEBI:16330"/>
    </ligand>
</feature>
<feature type="binding site" evidence="2">
    <location>
        <position position="853"/>
    </location>
    <ligand>
        <name>17beta-hydroxy-5alpha-androstan-3-one</name>
        <dbReference type="ChEBI" id="CHEBI:16330"/>
    </ligand>
</feature>
<feature type="site" description="Interaction with coactivator LXXL and FXXFY motifs" evidence="2">
    <location>
        <position position="696"/>
    </location>
</feature>
<feature type="site" description="Interaction with coactivator FXXLF and FXXFY motifs" evidence="2">
    <location>
        <position position="873"/>
    </location>
</feature>
<feature type="modified residue" description="Phosphoserine; by CDK9" evidence="2">
    <location>
        <position position="65"/>
    </location>
</feature>
<feature type="modified residue" description="Phosphoserine" evidence="2">
    <location>
        <position position="79"/>
    </location>
</feature>
<feature type="modified residue" description="Phosphotyrosine; by CSK" evidence="2">
    <location>
        <position position="208"/>
    </location>
</feature>
<feature type="modified residue" description="Phosphoserine" evidence="2">
    <location>
        <position position="241"/>
    </location>
</feature>
<feature type="modified residue" description="Phosphotyrosine; by CSK and TNK2" evidence="2">
    <location>
        <position position="252"/>
    </location>
</feature>
<feature type="modified residue" description="Phosphotyrosine; by CSK" evidence="2">
    <location>
        <position position="292"/>
    </location>
</feature>
<feature type="modified residue" description="Phosphotyrosine; by CSK" evidence="2">
    <location>
        <position position="331"/>
    </location>
</feature>
<feature type="modified residue" description="Phosphotyrosine; by CSK" evidence="2">
    <location>
        <position position="342"/>
    </location>
</feature>
<feature type="modified residue" description="Phosphotyrosine; by CSK" evidence="2">
    <location>
        <position position="347"/>
    </location>
</feature>
<feature type="modified residue" description="Phosphotyrosine; by CSK and TNK2" evidence="2">
    <location>
        <position position="348"/>
    </location>
</feature>
<feature type="modified residue" description="Phosphotyrosine; by CSK" evidence="2">
    <location>
        <position position="378"/>
    </location>
</feature>
<feature type="modified residue" description="Phosphotyrosine; by CSK" evidence="2">
    <location>
        <position position="510"/>
    </location>
</feature>
<feature type="modified residue" description="Phosphotyrosine; by CSK" evidence="2">
    <location>
        <position position="527"/>
    </location>
</feature>
<feature type="modified residue" description="Phosphoserine; by STK4/MST1" evidence="2">
    <location>
        <position position="626"/>
    </location>
</feature>
<feature type="modified residue" description="Phosphotyrosine; by CSK" evidence="2">
    <location>
        <position position="891"/>
    </location>
</feature>
<feature type="cross-link" description="Glycyl lysine isopeptide (Lys-Gly) (interchain with G-Cter in SUMO)" evidence="1">
    <location>
        <position position="371"/>
    </location>
</feature>
<feature type="cross-link" description="Glycyl lysine isopeptide (Lys-Gly) (interchain with G-Cter in SUMO)" evidence="1">
    <location>
        <position position="496"/>
    </location>
</feature>
<feature type="cross-link" description="Glycyl lysine isopeptide (Lys-Gly) (interchain with G-Cter in ubiquitin)" evidence="2">
    <location>
        <position position="821"/>
    </location>
</feature>
<feature type="cross-link" description="Glycyl lysine isopeptide (Lys-Gly) (interchain with G-Cter in ubiquitin)" evidence="2">
    <location>
        <position position="823"/>
    </location>
</feature>
<comment type="function">
    <text evidence="2 3">Steroid hormone receptors are ligand-activated transcription factors that regulate eukaryotic gene expression and affect cellular proliferation and differentiation in target tissues. Transcription factor activity is modulated by bound coactivator and corepressor proteins like ZBTB7A that recruits NCOR1 and NCOR2 to the androgen response elements/ARE on target genes, negatively regulating androgen receptor signaling and androgen-induced cell proliferation. Transcription activation is also down-regulated by NR0B2. Activated, but not phosphorylated, by HIPK3 and ZIPK/DAPK3.</text>
</comment>
<comment type="subunit">
    <text evidence="2 3 4">Binds DNA as a homodimer. Part of a ternary complex containing AR, EFCAB6/DJBP and PARK7. Interacts with HIPK3 and NR0B2 in the presence of androgen. The ligand binding domain interacts with KAT7/HBO1 in the presence of dihydrotestosterone. Interacts with EFCAB6/DJBP, PQBP1, RANBP9, RBAK, SPDEF, SRA1, TGFB1I1 and RREB1. Interacts with ZMIZ1/ZIMP10 and ZMIZ2/ZMIP7 which both enhance its transactivation activity. Interacts with SLC30A9 and RAD54L2/ARIP4. Interacts with MACROD1 (via macro domain) (By similarity). Interacts via the ligand-binding domain with LXXLL and FXXLF motifs from NCOA1, NCOA2, NCOA3 and MAGEA11. Interacts (via nuclear receptor DNA binding domain and nuclear receptor ligand binding domain) with NCOA4 (By similarity). The AR N-terminal poly-Gln region binds Ran resulting in enhancement of AR-mediated transactivation. Ran-binding decreases as the poly-Gln length increases. Interacts with HIP1 (via coiled coil domain). Interacts (via ligand-binding domain) with TRIM68. Interacts with TNK2. Interacts with USP26. Interacts with RNF6. Interacts (regulated by RNF6 probably through polyubiquitination) with RNF14; regulates AR transcriptional activity. Interacts with PRMT2 and TRIM24. Interacts with RACK1. Interacts with RANBP10; this interaction enhances dihydrotestosterone-induced AR transcriptional activity. Interacts with PRPF6 in a hormone-independent way; this interaction enhances dihydrotestosterone-induced AR transcriptional activity. Interacts with STK4/MST1. Interacts with ZIPK/DAPK3. Interacts with LPXN. Interacts with MAK. Part of a complex containing AR, MAK and NCOA3. Interacts with CRY1. Interacts with CCAR1 and GATA2. Interacts with ZNF318. Interacts with BUD31. Interacts with ARID4A. Interacts with ARID4B. Interacts (via NR LBD domain) with ZBTB7A; the interaction is direct and androgen-dependent (By similarity). Interacts with NCOR1 (By similarity). Interacts with NCOR2 (By similarity). Interacts with CRY2 in a ligand-dependent manner (By similarity).</text>
</comment>
<comment type="subcellular location">
    <subcellularLocation>
        <location evidence="2">Nucleus</location>
    </subcellularLocation>
    <subcellularLocation>
        <location evidence="2">Cytoplasm</location>
    </subcellularLocation>
    <text evidence="2">Detected at the promoter of target genes. Predominantly cytoplasmic in unligated form but translocates to the nucleus upon ligand-binding. Can also translocate to the nucleus in unligated form in the presence of RACK1.</text>
</comment>
<comment type="domain">
    <text evidence="1">Composed of three domains: a modulating N-terminal domain, a DNA-binding domain and a C-terminal ligand-binding domain. In the presence of bound steroid the ligand-binding domain interacts with the N-terminal modulating domain, and thereby activates AR transcription factor activity. Agonist binding is required for dimerization and binding to target DNA. The transcription factor activity of the complex formed by ligand-activated AR and DNA is modulated by interactions with coactivator and corepressor proteins. Interaction with RANBP9 is mediated by both the N-terminal domain and the DNA-binding domain. Interaction with EFCAB6/DJBP is mediated by the DNA-binding domain (By similarity).</text>
</comment>
<comment type="PTM">
    <text evidence="2">Phosphorylated in prostate cancer cells in response to several growth factors including EGF. Phosphorylation is induced by c-Src kinase (CSK). Tyr-510 is one of the major phosphorylation sites and an increase in phosphorylation and Src kinase activity is associated with prostate cancer progression (By similarity). Phosphorylation by TNK2 enhances the DNA-binding and transcriptional activity. Phosphorylation at Ser-65 by CDK9 regulates AR promoter selectivity and cell growth (By similarity).</text>
</comment>
<comment type="PTM">
    <text evidence="2">Sumoylated on Lys-371 (major) and Lys-496 (By similarity). Ubiquitinated. Deubiquitinated by USP26 (By similarity). 'Lys-6' and 'Lys-27'-linked polyubiquitination by RNF6 modulates AR transcriptional activity and specificity (By similarity).</text>
</comment>
<comment type="PTM">
    <text evidence="2">Palmitoylated by ZDHHC7 and ZDHHC21. Palmitoylation is required for plasma membrane targeting and for rapid intracellular signaling via ERK and AKT kinases and cAMP generation.</text>
</comment>
<comment type="miscellaneous">
    <text>In the absence of ligand, steroid hormone receptors are thought to be weakly associated with nuclear components; hormone binding greatly increases receptor affinity. The hormone-receptor complex appears to recognize discrete DNA sequences upstream of transcriptional start sites.</text>
</comment>
<comment type="miscellaneous">
    <text>Transcriptional activity is enhanced by binding to RANBP9.</text>
</comment>
<comment type="similarity">
    <text evidence="8">Belongs to the nuclear hormone receptor family. NR3 subfamily.</text>
</comment>
<dbReference type="EMBL" id="U94179">
    <property type="protein sequence ID" value="AAC73050.1"/>
    <property type="molecule type" value="mRNA"/>
</dbReference>
<dbReference type="SMR" id="O97952"/>
<dbReference type="STRING" id="9541.ENSMFAP00000031008"/>
<dbReference type="eggNOG" id="KOG3575">
    <property type="taxonomic scope" value="Eukaryota"/>
</dbReference>
<dbReference type="Proteomes" id="UP000233100">
    <property type="component" value="Unplaced"/>
</dbReference>
<dbReference type="GO" id="GO:0000785">
    <property type="term" value="C:chromatin"/>
    <property type="evidence" value="ECO:0000250"/>
    <property type="project" value="UniProtKB"/>
</dbReference>
<dbReference type="GO" id="GO:0005737">
    <property type="term" value="C:cytoplasm"/>
    <property type="evidence" value="ECO:0000250"/>
    <property type="project" value="UniProtKB"/>
</dbReference>
<dbReference type="GO" id="GO:0005654">
    <property type="term" value="C:nucleoplasm"/>
    <property type="evidence" value="ECO:0007669"/>
    <property type="project" value="UniProtKB-ARBA"/>
</dbReference>
<dbReference type="GO" id="GO:0005634">
    <property type="term" value="C:nucleus"/>
    <property type="evidence" value="ECO:0000250"/>
    <property type="project" value="UniProtKB"/>
</dbReference>
<dbReference type="GO" id="GO:0005497">
    <property type="term" value="F:androgen binding"/>
    <property type="evidence" value="ECO:0000250"/>
    <property type="project" value="UniProtKB"/>
</dbReference>
<dbReference type="GO" id="GO:0008013">
    <property type="term" value="F:beta-catenin binding"/>
    <property type="evidence" value="ECO:0000250"/>
    <property type="project" value="UniProtKB"/>
</dbReference>
<dbReference type="GO" id="GO:0003700">
    <property type="term" value="F:DNA-binding transcription factor activity"/>
    <property type="evidence" value="ECO:0000250"/>
    <property type="project" value="UniProtKB"/>
</dbReference>
<dbReference type="GO" id="GO:0004879">
    <property type="term" value="F:nuclear receptor activity"/>
    <property type="evidence" value="ECO:0000250"/>
    <property type="project" value="UniProtKB"/>
</dbReference>
<dbReference type="GO" id="GO:0005496">
    <property type="term" value="F:steroid binding"/>
    <property type="evidence" value="ECO:0007669"/>
    <property type="project" value="UniProtKB-KW"/>
</dbReference>
<dbReference type="GO" id="GO:0000976">
    <property type="term" value="F:transcription cis-regulatory region binding"/>
    <property type="evidence" value="ECO:0000250"/>
    <property type="project" value="UniProtKB"/>
</dbReference>
<dbReference type="GO" id="GO:0008270">
    <property type="term" value="F:zinc ion binding"/>
    <property type="evidence" value="ECO:0007669"/>
    <property type="project" value="UniProtKB-KW"/>
</dbReference>
<dbReference type="GO" id="GO:0030521">
    <property type="term" value="P:androgen receptor signaling pathway"/>
    <property type="evidence" value="ECO:0000250"/>
    <property type="project" value="UniProtKB"/>
</dbReference>
<dbReference type="GO" id="GO:0030522">
    <property type="term" value="P:intracellular receptor signaling pathway"/>
    <property type="evidence" value="ECO:0000250"/>
    <property type="project" value="UniProtKB"/>
</dbReference>
<dbReference type="GO" id="GO:2001237">
    <property type="term" value="P:negative regulation of extrinsic apoptotic signaling pathway"/>
    <property type="evidence" value="ECO:0000250"/>
    <property type="project" value="UniProtKB"/>
</dbReference>
<dbReference type="GO" id="GO:0008284">
    <property type="term" value="P:positive regulation of cell population proliferation"/>
    <property type="evidence" value="ECO:0000250"/>
    <property type="project" value="UniProtKB"/>
</dbReference>
<dbReference type="GO" id="GO:0010628">
    <property type="term" value="P:positive regulation of gene expression"/>
    <property type="evidence" value="ECO:0000250"/>
    <property type="project" value="UniProtKB"/>
</dbReference>
<dbReference type="GO" id="GO:0045944">
    <property type="term" value="P:positive regulation of transcription by RNA polymerase II"/>
    <property type="evidence" value="ECO:0000250"/>
    <property type="project" value="UniProtKB"/>
</dbReference>
<dbReference type="GO" id="GO:1903076">
    <property type="term" value="P:regulation of protein localization to plasma membrane"/>
    <property type="evidence" value="ECO:0000250"/>
    <property type="project" value="UniProtKB"/>
</dbReference>
<dbReference type="CDD" id="cd07173">
    <property type="entry name" value="NR_DBD_AR"/>
    <property type="match status" value="1"/>
</dbReference>
<dbReference type="CDD" id="cd07073">
    <property type="entry name" value="NR_LBD_AR"/>
    <property type="match status" value="1"/>
</dbReference>
<dbReference type="FunFam" id="3.30.50.10:FF:000024">
    <property type="entry name" value="Androgen receptor"/>
    <property type="match status" value="1"/>
</dbReference>
<dbReference type="FunFam" id="1.10.565.10:FF:000004">
    <property type="entry name" value="Androgen receptor variant"/>
    <property type="match status" value="1"/>
</dbReference>
<dbReference type="Gene3D" id="3.30.50.10">
    <property type="entry name" value="Erythroid Transcription Factor GATA-1, subunit A"/>
    <property type="match status" value="1"/>
</dbReference>
<dbReference type="Gene3D" id="1.10.565.10">
    <property type="entry name" value="Retinoid X Receptor"/>
    <property type="match status" value="1"/>
</dbReference>
<dbReference type="InterPro" id="IPR001103">
    <property type="entry name" value="Andrgn_rcpt"/>
</dbReference>
<dbReference type="InterPro" id="IPR035500">
    <property type="entry name" value="NHR-like_dom_sf"/>
</dbReference>
<dbReference type="InterPro" id="IPR000536">
    <property type="entry name" value="Nucl_hrmn_rcpt_lig-bd"/>
</dbReference>
<dbReference type="InterPro" id="IPR050200">
    <property type="entry name" value="Nuclear_hormone_rcpt_NR3"/>
</dbReference>
<dbReference type="InterPro" id="IPR001628">
    <property type="entry name" value="Znf_hrmn_rcpt"/>
</dbReference>
<dbReference type="InterPro" id="IPR013088">
    <property type="entry name" value="Znf_NHR/GATA"/>
</dbReference>
<dbReference type="PANTHER" id="PTHR48092">
    <property type="entry name" value="KNIRPS-RELATED PROTEIN-RELATED"/>
    <property type="match status" value="1"/>
</dbReference>
<dbReference type="Pfam" id="PF02166">
    <property type="entry name" value="Androgen_recep"/>
    <property type="match status" value="1"/>
</dbReference>
<dbReference type="Pfam" id="PF00104">
    <property type="entry name" value="Hormone_recep"/>
    <property type="match status" value="1"/>
</dbReference>
<dbReference type="Pfam" id="PF00105">
    <property type="entry name" value="zf-C4"/>
    <property type="match status" value="1"/>
</dbReference>
<dbReference type="PRINTS" id="PR00521">
    <property type="entry name" value="ANDROGENR"/>
</dbReference>
<dbReference type="PRINTS" id="PR00047">
    <property type="entry name" value="STROIDFINGER"/>
</dbReference>
<dbReference type="SMART" id="SM00430">
    <property type="entry name" value="HOLI"/>
    <property type="match status" value="1"/>
</dbReference>
<dbReference type="SMART" id="SM00399">
    <property type="entry name" value="ZnF_C4"/>
    <property type="match status" value="1"/>
</dbReference>
<dbReference type="SUPFAM" id="SSF57716">
    <property type="entry name" value="Glucocorticoid receptor-like (DNA-binding domain)"/>
    <property type="match status" value="1"/>
</dbReference>
<dbReference type="SUPFAM" id="SSF48508">
    <property type="entry name" value="Nuclear receptor ligand-binding domain"/>
    <property type="match status" value="1"/>
</dbReference>
<dbReference type="PROSITE" id="PS51843">
    <property type="entry name" value="NR_LBD"/>
    <property type="match status" value="1"/>
</dbReference>
<dbReference type="PROSITE" id="PS00031">
    <property type="entry name" value="NUCLEAR_REC_DBD_1"/>
    <property type="match status" value="1"/>
</dbReference>
<dbReference type="PROSITE" id="PS51030">
    <property type="entry name" value="NUCLEAR_REC_DBD_2"/>
    <property type="match status" value="1"/>
</dbReference>
<evidence type="ECO:0000250" key="1"/>
<evidence type="ECO:0000250" key="2">
    <source>
        <dbReference type="UniProtKB" id="P10275"/>
    </source>
</evidence>
<evidence type="ECO:0000250" key="3">
    <source>
        <dbReference type="UniProtKB" id="P15207"/>
    </source>
</evidence>
<evidence type="ECO:0000250" key="4">
    <source>
        <dbReference type="UniProtKB" id="P19091"/>
    </source>
</evidence>
<evidence type="ECO:0000255" key="5">
    <source>
        <dbReference type="PROSITE-ProRule" id="PRU00407"/>
    </source>
</evidence>
<evidence type="ECO:0000255" key="6">
    <source>
        <dbReference type="PROSITE-ProRule" id="PRU01189"/>
    </source>
</evidence>
<evidence type="ECO:0000256" key="7">
    <source>
        <dbReference type="SAM" id="MobiDB-lite"/>
    </source>
</evidence>
<evidence type="ECO:0000305" key="8"/>
<sequence>MEVQLGLGRVYPRPPSKTYRGAFQNLFQSVREVIQNPGPRHPEAASAAPPGASLQQQQQQQQETSPRQQQQQQQGEDGSPQAHRRGPTGYLVLDEEQQPSQPQSAPECHPERGCVPEPGAAVAAGKGLPQQLPAPPDEDDSAAPSTLSLLGPTFPGLSSCSTDLKDILSEASTMQLLQQQQQEAVSEGSSSGRAREASGAPTSSKDNYLGGTSTISDSAKELCKAVSVSMGLGVEALEHLSPGEQLRGDCMYAPVLGVPPAVRPTPCAPLAECKGSLLDDSAGKSTEDTAEYSPFKGGYTKGLEGESLGCSGSAAAGSSGTLELPSTLSLYKSGALDEAAAYQSRDYYNFPLALAGPPPPPPPPHPHARIKLENPLDYGSAWAAAAAQCRYGDLASLHGAGAAGPGSGSPSAAASSSWHTLFTAEEGQLYGPCGGGGGGGGGGGGGAGEAGAVAPYGYTRPPQGLAGQEGDFTAPDVWYPGGMVSRVPYPSPTCVKSEMGPWMDSYSGPYGDMRLETARDHVLPIDYYFPPQKTCLICGDEASGCHYGALTCGSCKVFFKRAAEGKQKYLCASRNDCTIDKFRRKNCPSCRLRKCYEAGMTLGARKLKKLGNLKLQEEGEASSTTSPTEETAQKLTVSHIEGYECQPIFLNVLEAIEPGVVCAGHDNNQPDSFAALLSSLNELGERQLVHVVKWAKALPGFRNLHVDDQMAVIQYSWMGLMVFAMGWRSFTNVNSRMLYFAPDLVFNEYRMHKSRMYSQCVRMRHLSQEFGWLQITPQEFLCMKALLLFSIIPVDGLKNQKFFDELRMNYIKELDRIIACKRKNPTSCSRRFYQLTKLLDSVQPIARELHQFTFDLLIKSHMVSVDFPEMMAEIISVQVPKILSGKVKPIYFHTQ</sequence>
<proteinExistence type="evidence at transcript level"/>
<reference key="1">
    <citation type="journal article" date="1998" name="J. Mol. Evol.">
        <title>Evolution of the primate androgen receptor: a structural basis for disease.</title>
        <authorList>
            <person name="Choong C.S."/>
            <person name="Kemppainen J.A."/>
            <person name="Wilson E.M."/>
        </authorList>
    </citation>
    <scope>NUCLEOTIDE SEQUENCE [MRNA]</scope>
</reference>
<gene>
    <name type="primary">AR</name>
    <name type="synonym">NR3C4</name>
</gene>